<protein>
    <recommendedName>
        <fullName evidence="1">Isocitrate dehydrogenase kinase/phosphatase</fullName>
        <shortName evidence="1">IDH kinase/phosphatase</shortName>
        <shortName evidence="1">IDHK/P</shortName>
        <ecNumber evidence="1">2.7.11.5</ecNumber>
        <ecNumber evidence="1">3.1.3.-</ecNumber>
    </recommendedName>
</protein>
<reference key="1">
    <citation type="journal article" date="2011" name="J. Bacteriol.">
        <title>Comparative genomics of 28 Salmonella enterica isolates: evidence for CRISPR-mediated adaptive sublineage evolution.</title>
        <authorList>
            <person name="Fricke W.F."/>
            <person name="Mammel M.K."/>
            <person name="McDermott P.F."/>
            <person name="Tartera C."/>
            <person name="White D.G."/>
            <person name="Leclerc J.E."/>
            <person name="Ravel J."/>
            <person name="Cebula T.A."/>
        </authorList>
    </citation>
    <scope>NUCLEOTIDE SEQUENCE [LARGE SCALE GENOMIC DNA]</scope>
    <source>
        <strain>SL254</strain>
    </source>
</reference>
<feature type="chain" id="PRO_1000133282" description="Isocitrate dehydrogenase kinase/phosphatase">
    <location>
        <begin position="1"/>
        <end position="583"/>
    </location>
</feature>
<feature type="active site" evidence="1">
    <location>
        <position position="371"/>
    </location>
</feature>
<feature type="binding site" evidence="1">
    <location>
        <begin position="315"/>
        <end position="321"/>
    </location>
    <ligand>
        <name>ATP</name>
        <dbReference type="ChEBI" id="CHEBI:30616"/>
    </ligand>
</feature>
<feature type="binding site" evidence="1">
    <location>
        <position position="336"/>
    </location>
    <ligand>
        <name>ATP</name>
        <dbReference type="ChEBI" id="CHEBI:30616"/>
    </ligand>
</feature>
<gene>
    <name evidence="1" type="primary">aceK</name>
    <name type="ordered locus">SNSL254_A4522</name>
</gene>
<proteinExistence type="inferred from homology"/>
<name>ACEK_SALNS</name>
<sequence>MPRGLELLIAQTILQGFDAQYGRFLEVTSGAQQRFEQADWHAVQQAMKSRIHLYDHHVGLVVEQLRCITDGKSTDADFLLRVKEHYTRLLPDYPRFEIAESFFNSVYCRLFDHRSLTPERLFIFSSQPERRFRTIPRPLAKDFFPDHGWEPLLMRILSDLPLRLPWQNKSRDIRYIIAHLTETLGEDALPRCHVQVANELFYRNKAAWLVGKLTTPDGTLPFLLPIHRTDEGELFVDTCLTTTAEASIVFGFARSYFMVYAPLPAALVEWLREILPGKTTAELYMAIGCQKHAKTESYREYLCYLAESDEKFIEAPGIRGMVMLVFTLPGFDRVFKIIKDKFAPQKEMSAAHVRACYQLVKEHDRVGRMADTQEFENFVLDKRQIDPALMALLRQEAPEKITDLGEHIVIRHLYIERRMVPLNIWLEQVEGQQLRDAIEEYGNAIRQLAAANIFPGDMLFKNFGVTRHGRVVFYDYDEICYMTEVNFRDIPPARYPEDELASEPWYSVSPGDVFPEEFRHWLCADPRIGPLFEEMHADLFRADYWRALQTRIKEGHVEDVYAYRRRQRFSVRYGAISSTANSS</sequence>
<evidence type="ECO:0000255" key="1">
    <source>
        <dbReference type="HAMAP-Rule" id="MF_00747"/>
    </source>
</evidence>
<keyword id="KW-0067">ATP-binding</keyword>
<keyword id="KW-0963">Cytoplasm</keyword>
<keyword id="KW-0329">Glyoxylate bypass</keyword>
<keyword id="KW-0378">Hydrolase</keyword>
<keyword id="KW-0418">Kinase</keyword>
<keyword id="KW-0547">Nucleotide-binding</keyword>
<keyword id="KW-0904">Protein phosphatase</keyword>
<keyword id="KW-0723">Serine/threonine-protein kinase</keyword>
<keyword id="KW-0808">Transferase</keyword>
<keyword id="KW-0816">Tricarboxylic acid cycle</keyword>
<organism>
    <name type="scientific">Salmonella newport (strain SL254)</name>
    <dbReference type="NCBI Taxonomy" id="423368"/>
    <lineage>
        <taxon>Bacteria</taxon>
        <taxon>Pseudomonadati</taxon>
        <taxon>Pseudomonadota</taxon>
        <taxon>Gammaproteobacteria</taxon>
        <taxon>Enterobacterales</taxon>
        <taxon>Enterobacteriaceae</taxon>
        <taxon>Salmonella</taxon>
    </lineage>
</organism>
<accession>B4T1M4</accession>
<comment type="function">
    <text evidence="1">Bifunctional enzyme which can phosphorylate or dephosphorylate isocitrate dehydrogenase (IDH) on a specific serine residue. This is a regulatory mechanism which enables bacteria to bypass the Krebs cycle via the glyoxylate shunt in response to the source of carbon. When bacteria are grown on glucose, IDH is fully active and unphosphorylated, but when grown on acetate or ethanol, the activity of IDH declines drastically concomitant with its phosphorylation.</text>
</comment>
<comment type="catalytic activity">
    <reaction evidence="1">
        <text>L-seryl-[isocitrate dehydrogenase] + ATP = O-phospho-L-seryl-[isocitrate dehydrogenase] + ADP + H(+)</text>
        <dbReference type="Rhea" id="RHEA:43540"/>
        <dbReference type="Rhea" id="RHEA-COMP:10605"/>
        <dbReference type="Rhea" id="RHEA-COMP:10606"/>
        <dbReference type="ChEBI" id="CHEBI:15378"/>
        <dbReference type="ChEBI" id="CHEBI:29999"/>
        <dbReference type="ChEBI" id="CHEBI:30616"/>
        <dbReference type="ChEBI" id="CHEBI:83421"/>
        <dbReference type="ChEBI" id="CHEBI:456216"/>
        <dbReference type="EC" id="2.7.11.5"/>
    </reaction>
</comment>
<comment type="subcellular location">
    <subcellularLocation>
        <location evidence="1">Cytoplasm</location>
    </subcellularLocation>
</comment>
<comment type="similarity">
    <text evidence="1">Belongs to the AceK family.</text>
</comment>
<dbReference type="EC" id="2.7.11.5" evidence="1"/>
<dbReference type="EC" id="3.1.3.-" evidence="1"/>
<dbReference type="EMBL" id="CP001113">
    <property type="protein sequence ID" value="ACF63211.1"/>
    <property type="molecule type" value="Genomic_DNA"/>
</dbReference>
<dbReference type="RefSeq" id="WP_001137266.1">
    <property type="nucleotide sequence ID" value="NZ_CCMR01000003.1"/>
</dbReference>
<dbReference type="SMR" id="B4T1M4"/>
<dbReference type="KEGG" id="see:SNSL254_A4522"/>
<dbReference type="HOGENOM" id="CLU_033804_1_1_6"/>
<dbReference type="Proteomes" id="UP000008824">
    <property type="component" value="Chromosome"/>
</dbReference>
<dbReference type="GO" id="GO:0005737">
    <property type="term" value="C:cytoplasm"/>
    <property type="evidence" value="ECO:0007669"/>
    <property type="project" value="UniProtKB-SubCell"/>
</dbReference>
<dbReference type="GO" id="GO:0008772">
    <property type="term" value="F:[isocitrate dehydrogenase (NADP+)] kinase activity"/>
    <property type="evidence" value="ECO:0007669"/>
    <property type="project" value="UniProtKB-UniRule"/>
</dbReference>
<dbReference type="GO" id="GO:0016208">
    <property type="term" value="F:AMP binding"/>
    <property type="evidence" value="ECO:0007669"/>
    <property type="project" value="TreeGrafter"/>
</dbReference>
<dbReference type="GO" id="GO:0005524">
    <property type="term" value="F:ATP binding"/>
    <property type="evidence" value="ECO:0007669"/>
    <property type="project" value="UniProtKB-UniRule"/>
</dbReference>
<dbReference type="GO" id="GO:0004721">
    <property type="term" value="F:phosphoprotein phosphatase activity"/>
    <property type="evidence" value="ECO:0007669"/>
    <property type="project" value="UniProtKB-KW"/>
</dbReference>
<dbReference type="GO" id="GO:0004674">
    <property type="term" value="F:protein serine/threonine kinase activity"/>
    <property type="evidence" value="ECO:0007669"/>
    <property type="project" value="UniProtKB-KW"/>
</dbReference>
<dbReference type="GO" id="GO:0006006">
    <property type="term" value="P:glucose metabolic process"/>
    <property type="evidence" value="ECO:0007669"/>
    <property type="project" value="InterPro"/>
</dbReference>
<dbReference type="GO" id="GO:0006097">
    <property type="term" value="P:glyoxylate cycle"/>
    <property type="evidence" value="ECO:0007669"/>
    <property type="project" value="UniProtKB-UniRule"/>
</dbReference>
<dbReference type="GO" id="GO:0006099">
    <property type="term" value="P:tricarboxylic acid cycle"/>
    <property type="evidence" value="ECO:0007669"/>
    <property type="project" value="UniProtKB-UniRule"/>
</dbReference>
<dbReference type="HAMAP" id="MF_00747">
    <property type="entry name" value="AceK"/>
    <property type="match status" value="1"/>
</dbReference>
<dbReference type="InterPro" id="IPR046855">
    <property type="entry name" value="AceK_kinase"/>
</dbReference>
<dbReference type="InterPro" id="IPR046854">
    <property type="entry name" value="AceK_regulatory"/>
</dbReference>
<dbReference type="InterPro" id="IPR010452">
    <property type="entry name" value="Isocitrate_DH_AceK"/>
</dbReference>
<dbReference type="NCBIfam" id="NF002804">
    <property type="entry name" value="PRK02946.1"/>
    <property type="match status" value="1"/>
</dbReference>
<dbReference type="PANTHER" id="PTHR39559">
    <property type="match status" value="1"/>
</dbReference>
<dbReference type="PANTHER" id="PTHR39559:SF1">
    <property type="entry name" value="ISOCITRATE DEHYDROGENASE KINASE_PHOSPHATASE"/>
    <property type="match status" value="1"/>
</dbReference>
<dbReference type="Pfam" id="PF06315">
    <property type="entry name" value="AceK_kinase"/>
    <property type="match status" value="1"/>
</dbReference>
<dbReference type="Pfam" id="PF20423">
    <property type="entry name" value="AceK_regulatory"/>
    <property type="match status" value="1"/>
</dbReference>
<dbReference type="PIRSF" id="PIRSF000719">
    <property type="entry name" value="AceK"/>
    <property type="match status" value="1"/>
</dbReference>